<evidence type="ECO:0000256" key="1">
    <source>
        <dbReference type="SAM" id="MobiDB-lite"/>
    </source>
</evidence>
<protein>
    <recommendedName>
        <fullName>Putative protein DDB_G0285185</fullName>
    </recommendedName>
</protein>
<accession>Q54NK3</accession>
<gene>
    <name type="ORF">DDB_G0285185</name>
</gene>
<sequence>MENEEEIFKKLLKKASASSFEKIINLDLNNCSVDFNKYVLLLPKLINLKCLILSNNNTNQLPPFENLQSLEELYLRNFSVTPQQINKTSLSTDSDLTKSFITKIKTLTKLKHLVITGTKFDTNSSKDYIIHYLTTLETLNFERITNEKRQDVNNRIKLIREKHLINKSPTSAKILTTPNKTVVNRQQPQDLSTKKLVNTTSSIINISKSTPNKLQNQVQSSPKLSSPITKNKEQIVSTTSPQKLNNKVDFKLPPQIIDRNSPKHQPKIQSDVSSPLPIEIIPNIIEKTSDRLNGQSNLIQAISLLIGSITTLNDIDFIEDILYERKKILK</sequence>
<feature type="chain" id="PRO_0000350796" description="Putative protein DDB_G0285185">
    <location>
        <begin position="1"/>
        <end position="330"/>
    </location>
</feature>
<feature type="region of interest" description="Disordered" evidence="1">
    <location>
        <begin position="212"/>
        <end position="240"/>
    </location>
</feature>
<feature type="compositionally biased region" description="Polar residues" evidence="1">
    <location>
        <begin position="214"/>
        <end position="240"/>
    </location>
</feature>
<dbReference type="EMBL" id="AAFI02000075">
    <property type="protein sequence ID" value="EAL64849.1"/>
    <property type="molecule type" value="Genomic_DNA"/>
</dbReference>
<dbReference type="RefSeq" id="XP_638359.1">
    <property type="nucleotide sequence ID" value="XM_633267.1"/>
</dbReference>
<dbReference type="SMR" id="Q54NK3"/>
<dbReference type="FunCoup" id="Q54NK3">
    <property type="interactions" value="1"/>
</dbReference>
<dbReference type="PaxDb" id="44689-DDB0186386"/>
<dbReference type="EnsemblProtists" id="EAL64849">
    <property type="protein sequence ID" value="EAL64849"/>
    <property type="gene ID" value="DDB_G0285185"/>
</dbReference>
<dbReference type="GeneID" id="8624983"/>
<dbReference type="KEGG" id="ddi:DDB_G0285185"/>
<dbReference type="dictyBase" id="DDB_G0285185"/>
<dbReference type="VEuPathDB" id="AmoebaDB:DDB_G0285185"/>
<dbReference type="eggNOG" id="ENOG502RI08">
    <property type="taxonomic scope" value="Eukaryota"/>
</dbReference>
<dbReference type="HOGENOM" id="CLU_843139_0_0_1"/>
<dbReference type="InParanoid" id="Q54NK3"/>
<dbReference type="OMA" id="NDYIICY"/>
<dbReference type="PRO" id="PR:Q54NK3"/>
<dbReference type="Proteomes" id="UP000002195">
    <property type="component" value="Chromosome 4"/>
</dbReference>
<dbReference type="Gene3D" id="3.80.10.10">
    <property type="entry name" value="Ribonuclease Inhibitor"/>
    <property type="match status" value="1"/>
</dbReference>
<dbReference type="InterPro" id="IPR001611">
    <property type="entry name" value="Leu-rich_rpt"/>
</dbReference>
<dbReference type="InterPro" id="IPR032675">
    <property type="entry name" value="LRR_dom_sf"/>
</dbReference>
<dbReference type="SUPFAM" id="SSF52047">
    <property type="entry name" value="RNI-like"/>
    <property type="match status" value="1"/>
</dbReference>
<dbReference type="PROSITE" id="PS51450">
    <property type="entry name" value="LRR"/>
    <property type="match status" value="1"/>
</dbReference>
<reference key="1">
    <citation type="journal article" date="2005" name="Nature">
        <title>The genome of the social amoeba Dictyostelium discoideum.</title>
        <authorList>
            <person name="Eichinger L."/>
            <person name="Pachebat J.A."/>
            <person name="Gloeckner G."/>
            <person name="Rajandream M.A."/>
            <person name="Sucgang R."/>
            <person name="Berriman M."/>
            <person name="Song J."/>
            <person name="Olsen R."/>
            <person name="Szafranski K."/>
            <person name="Xu Q."/>
            <person name="Tunggal B."/>
            <person name="Kummerfeld S."/>
            <person name="Madera M."/>
            <person name="Konfortov B.A."/>
            <person name="Rivero F."/>
            <person name="Bankier A.T."/>
            <person name="Lehmann R."/>
            <person name="Hamlin N."/>
            <person name="Davies R."/>
            <person name="Gaudet P."/>
            <person name="Fey P."/>
            <person name="Pilcher K."/>
            <person name="Chen G."/>
            <person name="Saunders D."/>
            <person name="Sodergren E.J."/>
            <person name="Davis P."/>
            <person name="Kerhornou A."/>
            <person name="Nie X."/>
            <person name="Hall N."/>
            <person name="Anjard C."/>
            <person name="Hemphill L."/>
            <person name="Bason N."/>
            <person name="Farbrother P."/>
            <person name="Desany B."/>
            <person name="Just E."/>
            <person name="Morio T."/>
            <person name="Rost R."/>
            <person name="Churcher C.M."/>
            <person name="Cooper J."/>
            <person name="Haydock S."/>
            <person name="van Driessche N."/>
            <person name="Cronin A."/>
            <person name="Goodhead I."/>
            <person name="Muzny D.M."/>
            <person name="Mourier T."/>
            <person name="Pain A."/>
            <person name="Lu M."/>
            <person name="Harper D."/>
            <person name="Lindsay R."/>
            <person name="Hauser H."/>
            <person name="James K.D."/>
            <person name="Quiles M."/>
            <person name="Madan Babu M."/>
            <person name="Saito T."/>
            <person name="Buchrieser C."/>
            <person name="Wardroper A."/>
            <person name="Felder M."/>
            <person name="Thangavelu M."/>
            <person name="Johnson D."/>
            <person name="Knights A."/>
            <person name="Loulseged H."/>
            <person name="Mungall K.L."/>
            <person name="Oliver K."/>
            <person name="Price C."/>
            <person name="Quail M.A."/>
            <person name="Urushihara H."/>
            <person name="Hernandez J."/>
            <person name="Rabbinowitsch E."/>
            <person name="Steffen D."/>
            <person name="Sanders M."/>
            <person name="Ma J."/>
            <person name="Kohara Y."/>
            <person name="Sharp S."/>
            <person name="Simmonds M.N."/>
            <person name="Spiegler S."/>
            <person name="Tivey A."/>
            <person name="Sugano S."/>
            <person name="White B."/>
            <person name="Walker D."/>
            <person name="Woodward J.R."/>
            <person name="Winckler T."/>
            <person name="Tanaka Y."/>
            <person name="Shaulsky G."/>
            <person name="Schleicher M."/>
            <person name="Weinstock G.M."/>
            <person name="Rosenthal A."/>
            <person name="Cox E.C."/>
            <person name="Chisholm R.L."/>
            <person name="Gibbs R.A."/>
            <person name="Loomis W.F."/>
            <person name="Platzer M."/>
            <person name="Kay R.R."/>
            <person name="Williams J.G."/>
            <person name="Dear P.H."/>
            <person name="Noegel A.A."/>
            <person name="Barrell B.G."/>
            <person name="Kuspa A."/>
        </authorList>
    </citation>
    <scope>NUCLEOTIDE SEQUENCE [LARGE SCALE GENOMIC DNA]</scope>
    <source>
        <strain>AX4</strain>
    </source>
</reference>
<keyword id="KW-1185">Reference proteome</keyword>
<proteinExistence type="predicted"/>
<name>Y6386_DICDI</name>
<organism>
    <name type="scientific">Dictyostelium discoideum</name>
    <name type="common">Social amoeba</name>
    <dbReference type="NCBI Taxonomy" id="44689"/>
    <lineage>
        <taxon>Eukaryota</taxon>
        <taxon>Amoebozoa</taxon>
        <taxon>Evosea</taxon>
        <taxon>Eumycetozoa</taxon>
        <taxon>Dictyostelia</taxon>
        <taxon>Dictyosteliales</taxon>
        <taxon>Dictyosteliaceae</taxon>
        <taxon>Dictyostelium</taxon>
    </lineage>
</organism>